<feature type="chain" id="PRO_0000435823" description="Protein TPR3">
    <location>
        <begin position="1"/>
        <end position="1133"/>
    </location>
</feature>
<feature type="domain" description="LisH" evidence="4">
    <location>
        <begin position="4"/>
        <end position="36"/>
    </location>
</feature>
<feature type="domain" description="CTLH" evidence="3">
    <location>
        <begin position="34"/>
        <end position="92"/>
    </location>
</feature>
<feature type="repeat" description="WD 1" evidence="2">
    <location>
        <begin position="348"/>
        <end position="388"/>
    </location>
</feature>
<feature type="repeat" description="WD 2" evidence="2">
    <location>
        <begin position="410"/>
        <end position="449"/>
    </location>
</feature>
<feature type="repeat" description="WD 3" evidence="2">
    <location>
        <begin position="455"/>
        <end position="496"/>
    </location>
</feature>
<feature type="repeat" description="WD 4" evidence="2">
    <location>
        <begin position="499"/>
        <end position="540"/>
    </location>
</feature>
<feature type="repeat" description="WD 5" evidence="2">
    <location>
        <begin position="543"/>
        <end position="586"/>
    </location>
</feature>
<feature type="repeat" description="WD 6" evidence="2">
    <location>
        <begin position="590"/>
        <end position="629"/>
    </location>
</feature>
<feature type="repeat" description="WD 7" evidence="2">
    <location>
        <begin position="634"/>
        <end position="673"/>
    </location>
</feature>
<feature type="repeat" description="WD 8" evidence="2">
    <location>
        <begin position="771"/>
        <end position="810"/>
    </location>
</feature>
<feature type="repeat" description="WD 9" evidence="2">
    <location>
        <begin position="837"/>
        <end position="875"/>
    </location>
</feature>
<feature type="repeat" description="WD 10" evidence="2">
    <location>
        <begin position="878"/>
        <end position="918"/>
    </location>
</feature>
<feature type="repeat" description="WD 11" evidence="2">
    <location>
        <begin position="921"/>
        <end position="960"/>
    </location>
</feature>
<feature type="repeat" description="WD 12" evidence="2">
    <location>
        <begin position="1014"/>
        <end position="1053"/>
    </location>
</feature>
<feature type="region of interest" description="Disordered" evidence="5">
    <location>
        <begin position="287"/>
        <end position="307"/>
    </location>
</feature>
<feature type="region of interest" description="Disordered" evidence="5">
    <location>
        <begin position="1099"/>
        <end position="1133"/>
    </location>
</feature>
<feature type="compositionally biased region" description="Polar residues" evidence="5">
    <location>
        <begin position="1112"/>
        <end position="1133"/>
    </location>
</feature>
<evidence type="ECO:0000250" key="1">
    <source>
        <dbReference type="UniProtKB" id="Q0J7U6"/>
    </source>
</evidence>
<evidence type="ECO:0000255" key="2"/>
<evidence type="ECO:0000255" key="3">
    <source>
        <dbReference type="PROSITE-ProRule" id="PRU00058"/>
    </source>
</evidence>
<evidence type="ECO:0000255" key="4">
    <source>
        <dbReference type="PROSITE-ProRule" id="PRU00126"/>
    </source>
</evidence>
<evidence type="ECO:0000256" key="5">
    <source>
        <dbReference type="SAM" id="MobiDB-lite"/>
    </source>
</evidence>
<evidence type="ECO:0000269" key="6">
    <source>
    </source>
</evidence>
<evidence type="ECO:0000269" key="7">
    <source>
    </source>
</evidence>
<evidence type="ECO:0000269" key="8">
    <source>
    </source>
</evidence>
<evidence type="ECO:0000269" key="9">
    <source>
    </source>
</evidence>
<evidence type="ECO:0000269" key="10">
    <source>
    </source>
</evidence>
<evidence type="ECO:0000269" key="11">
    <source>
    </source>
</evidence>
<evidence type="ECO:0000303" key="12">
    <source>
    </source>
</evidence>
<evidence type="ECO:0000303" key="13">
    <source>
    </source>
</evidence>
<evidence type="ECO:0000303" key="14">
    <source>
    </source>
</evidence>
<evidence type="ECO:0000305" key="15"/>
<evidence type="ECO:0000312" key="16">
    <source>
        <dbReference type="EMBL" id="ABF95023.1"/>
    </source>
</evidence>
<evidence type="ECO:0000312" key="17">
    <source>
        <dbReference type="EMBL" id="BAF11501.1"/>
    </source>
</evidence>
<evidence type="ECO:0000312" key="18">
    <source>
        <dbReference type="EMBL" id="EEE57834.1"/>
    </source>
</evidence>
<accession>Q10NY2</accession>
<accession>B9F327</accession>
<proteinExistence type="evidence at protein level"/>
<keyword id="KW-1185">Reference proteome</keyword>
<keyword id="KW-0677">Repeat</keyword>
<keyword id="KW-0853">WD repeat</keyword>
<gene>
    <name evidence="13" type="primary">TPR3</name>
    <name evidence="12" type="synonym">ASPR1</name>
    <name evidence="14" type="synonym">TPR1</name>
    <name evidence="17" type="ordered locus">Os03g0254700</name>
    <name evidence="16" type="ordered locus">LOC_Os03g14980</name>
    <name evidence="18" type="ORF">OsJ_08437</name>
</gene>
<name>TPR3_ORYSJ</name>
<organism evidence="16">
    <name type="scientific">Oryza sativa subsp. japonica</name>
    <name type="common">Rice</name>
    <dbReference type="NCBI Taxonomy" id="39947"/>
    <lineage>
        <taxon>Eukaryota</taxon>
        <taxon>Viridiplantae</taxon>
        <taxon>Streptophyta</taxon>
        <taxon>Embryophyta</taxon>
        <taxon>Tracheophyta</taxon>
        <taxon>Spermatophyta</taxon>
        <taxon>Magnoliopsida</taxon>
        <taxon>Liliopsida</taxon>
        <taxon>Poales</taxon>
        <taxon>Poaceae</taxon>
        <taxon>BOP clade</taxon>
        <taxon>Oryzoideae</taxon>
        <taxon>Oryzeae</taxon>
        <taxon>Oryzinae</taxon>
        <taxon>Oryza</taxon>
        <taxon>Oryza sativa</taxon>
    </lineage>
</organism>
<comment type="function">
    <text evidence="1 10">Probable downstream regulator of strigolactones signaling (By similarity). Functions in a complex with MODD and HDAC1 to down-regulate the histone acetylation level at BZIP46 target genes. BZIP46 is a positive regulator of abscisic acid (ABA) signaling and drought stress tolerance (PubMed:27468891).</text>
</comment>
<comment type="subunit">
    <text evidence="7 8 9 10 11">Tetramer (PubMed:26601214). Interacts with D53 (PubMed:24336200). Interacts with MODD and HDAC1 (PubMed:27468891). Interacts with WOX1 (PubMed:24336200, PubMed:25697101, PubMed:26601214, PubMed:27468891). Interacts with MOF1 (PubMed:32680975).</text>
</comment>
<comment type="tissue specificity">
    <text evidence="6">Expressed in panicles, stems, leaves, spikelets and seed endosperm.</text>
</comment>
<comment type="developmental stage">
    <text evidence="6">Highest expression in endosperm at 21 days after pollination.</text>
</comment>
<comment type="domain">
    <text evidence="9">The N-terminal TOPLESS domain (TPD) (1-209) binds directly to a 12-amino acid LxLxL EAR motif peptide.</text>
</comment>
<comment type="sequence caution" evidence="15">
    <conflict type="erroneous gene model prediction">
        <sequence resource="EMBL-CDS" id="EEE57834"/>
    </conflict>
</comment>
<reference key="1">
    <citation type="journal article" date="2012" name="Plant J.">
        <title>Aberrant spikelet and panicle1, encoding a TOPLESS-related transcriptional co-repressor, is involved in the regulation of meristem fate in rice.</title>
        <authorList>
            <person name="Yoshida A."/>
            <person name="Ohmori Y."/>
            <person name="Kitano H."/>
            <person name="Taguchi-Shiobara F."/>
            <person name="Hirano H."/>
        </authorList>
    </citation>
    <scope>NUCLEOTIDE SEQUENCE [MRNA]</scope>
    <scope>GENE FAMILY</scope>
    <scope>NOMENCLATURE</scope>
</reference>
<reference key="2">
    <citation type="journal article" date="2005" name="Genome Res.">
        <title>Sequence, annotation, and analysis of synteny between rice chromosome 3 and diverged grass species.</title>
        <authorList>
            <consortium name="The rice chromosome 3 sequencing consortium"/>
            <person name="Buell C.R."/>
            <person name="Yuan Q."/>
            <person name="Ouyang S."/>
            <person name="Liu J."/>
            <person name="Zhu W."/>
            <person name="Wang A."/>
            <person name="Maiti R."/>
            <person name="Haas B."/>
            <person name="Wortman J."/>
            <person name="Pertea M."/>
            <person name="Jones K.M."/>
            <person name="Kim M."/>
            <person name="Overton L."/>
            <person name="Tsitrin T."/>
            <person name="Fadrosh D."/>
            <person name="Bera J."/>
            <person name="Weaver B."/>
            <person name="Jin S."/>
            <person name="Johri S."/>
            <person name="Reardon M."/>
            <person name="Webb K."/>
            <person name="Hill J."/>
            <person name="Moffat K."/>
            <person name="Tallon L."/>
            <person name="Van Aken S."/>
            <person name="Lewis M."/>
            <person name="Utterback T."/>
            <person name="Feldblyum T."/>
            <person name="Zismann V."/>
            <person name="Iobst S."/>
            <person name="Hsiao J."/>
            <person name="de Vazeille A.R."/>
            <person name="Salzberg S.L."/>
            <person name="White O."/>
            <person name="Fraser C.M."/>
            <person name="Yu Y."/>
            <person name="Kim H."/>
            <person name="Rambo T."/>
            <person name="Currie J."/>
            <person name="Collura K."/>
            <person name="Kernodle-Thompson S."/>
            <person name="Wei F."/>
            <person name="Kudrna K."/>
            <person name="Ammiraju J.S.S."/>
            <person name="Luo M."/>
            <person name="Goicoechea J.L."/>
            <person name="Wing R.A."/>
            <person name="Henry D."/>
            <person name="Oates R."/>
            <person name="Palmer M."/>
            <person name="Pries G."/>
            <person name="Saski C."/>
            <person name="Simmons J."/>
            <person name="Soderlund C."/>
            <person name="Nelson W."/>
            <person name="de la Bastide M."/>
            <person name="Spiegel L."/>
            <person name="Nascimento L."/>
            <person name="Huang E."/>
            <person name="Preston R."/>
            <person name="Zutavern T."/>
            <person name="Palmer L."/>
            <person name="O'Shaughnessy A."/>
            <person name="Dike S."/>
            <person name="McCombie W.R."/>
            <person name="Minx P."/>
            <person name="Cordum H."/>
            <person name="Wilson R."/>
            <person name="Jin W."/>
            <person name="Lee H.R."/>
            <person name="Jiang J."/>
            <person name="Jackson S."/>
        </authorList>
    </citation>
    <scope>NUCLEOTIDE SEQUENCE [LARGE SCALE GENOMIC DNA]</scope>
    <source>
        <strain>cv. Nipponbare</strain>
    </source>
</reference>
<reference key="3">
    <citation type="journal article" date="2005" name="Nature">
        <title>The map-based sequence of the rice genome.</title>
        <authorList>
            <consortium name="International rice genome sequencing project (IRGSP)"/>
        </authorList>
    </citation>
    <scope>NUCLEOTIDE SEQUENCE [LARGE SCALE GENOMIC DNA]</scope>
    <source>
        <strain>cv. Nipponbare</strain>
    </source>
</reference>
<reference key="4">
    <citation type="journal article" date="2008" name="Nucleic Acids Res.">
        <title>The rice annotation project database (RAP-DB): 2008 update.</title>
        <authorList>
            <consortium name="The rice annotation project (RAP)"/>
        </authorList>
    </citation>
    <scope>GENOME REANNOTATION</scope>
    <source>
        <strain>cv. Nipponbare</strain>
    </source>
</reference>
<reference key="5">
    <citation type="journal article" date="2013" name="Rice">
        <title>Improvement of the Oryza sativa Nipponbare reference genome using next generation sequence and optical map data.</title>
        <authorList>
            <person name="Kawahara Y."/>
            <person name="de la Bastide M."/>
            <person name="Hamilton J.P."/>
            <person name="Kanamori H."/>
            <person name="McCombie W.R."/>
            <person name="Ouyang S."/>
            <person name="Schwartz D.C."/>
            <person name="Tanaka T."/>
            <person name="Wu J."/>
            <person name="Zhou S."/>
            <person name="Childs K.L."/>
            <person name="Davidson R.M."/>
            <person name="Lin H."/>
            <person name="Quesada-Ocampo L."/>
            <person name="Vaillancourt B."/>
            <person name="Sakai H."/>
            <person name="Lee S.S."/>
            <person name="Kim J."/>
            <person name="Numa H."/>
            <person name="Itoh T."/>
            <person name="Buell C.R."/>
            <person name="Matsumoto T."/>
        </authorList>
    </citation>
    <scope>GENOME REANNOTATION</scope>
    <source>
        <strain>cv. Nipponbare</strain>
    </source>
</reference>
<reference key="6">
    <citation type="journal article" date="2005" name="PLoS Biol.">
        <title>The genomes of Oryza sativa: a history of duplications.</title>
        <authorList>
            <person name="Yu J."/>
            <person name="Wang J."/>
            <person name="Lin W."/>
            <person name="Li S."/>
            <person name="Li H."/>
            <person name="Zhou J."/>
            <person name="Ni P."/>
            <person name="Dong W."/>
            <person name="Hu S."/>
            <person name="Zeng C."/>
            <person name="Zhang J."/>
            <person name="Zhang Y."/>
            <person name="Li R."/>
            <person name="Xu Z."/>
            <person name="Li S."/>
            <person name="Li X."/>
            <person name="Zheng H."/>
            <person name="Cong L."/>
            <person name="Lin L."/>
            <person name="Yin J."/>
            <person name="Geng J."/>
            <person name="Li G."/>
            <person name="Shi J."/>
            <person name="Liu J."/>
            <person name="Lv H."/>
            <person name="Li J."/>
            <person name="Wang J."/>
            <person name="Deng Y."/>
            <person name="Ran L."/>
            <person name="Shi X."/>
            <person name="Wang X."/>
            <person name="Wu Q."/>
            <person name="Li C."/>
            <person name="Ren X."/>
            <person name="Wang J."/>
            <person name="Wang X."/>
            <person name="Li D."/>
            <person name="Liu D."/>
            <person name="Zhang X."/>
            <person name="Ji Z."/>
            <person name="Zhao W."/>
            <person name="Sun Y."/>
            <person name="Zhang Z."/>
            <person name="Bao J."/>
            <person name="Han Y."/>
            <person name="Dong L."/>
            <person name="Ji J."/>
            <person name="Chen P."/>
            <person name="Wu S."/>
            <person name="Liu J."/>
            <person name="Xiao Y."/>
            <person name="Bu D."/>
            <person name="Tan J."/>
            <person name="Yang L."/>
            <person name="Ye C."/>
            <person name="Zhang J."/>
            <person name="Xu J."/>
            <person name="Zhou Y."/>
            <person name="Yu Y."/>
            <person name="Zhang B."/>
            <person name="Zhuang S."/>
            <person name="Wei H."/>
            <person name="Liu B."/>
            <person name="Lei M."/>
            <person name="Yu H."/>
            <person name="Li Y."/>
            <person name="Xu H."/>
            <person name="Wei S."/>
            <person name="He X."/>
            <person name="Fang L."/>
            <person name="Zhang Z."/>
            <person name="Zhang Y."/>
            <person name="Huang X."/>
            <person name="Su Z."/>
            <person name="Tong W."/>
            <person name="Li J."/>
            <person name="Tong Z."/>
            <person name="Li S."/>
            <person name="Ye J."/>
            <person name="Wang L."/>
            <person name="Fang L."/>
            <person name="Lei T."/>
            <person name="Chen C.-S."/>
            <person name="Chen H.-C."/>
            <person name="Xu Z."/>
            <person name="Li H."/>
            <person name="Huang H."/>
            <person name="Zhang F."/>
            <person name="Xu H."/>
            <person name="Li N."/>
            <person name="Zhao C."/>
            <person name="Li S."/>
            <person name="Dong L."/>
            <person name="Huang Y."/>
            <person name="Li L."/>
            <person name="Xi Y."/>
            <person name="Qi Q."/>
            <person name="Li W."/>
            <person name="Zhang B."/>
            <person name="Hu W."/>
            <person name="Zhang Y."/>
            <person name="Tian X."/>
            <person name="Jiao Y."/>
            <person name="Liang X."/>
            <person name="Jin J."/>
            <person name="Gao L."/>
            <person name="Zheng W."/>
            <person name="Hao B."/>
            <person name="Liu S.-M."/>
            <person name="Wang W."/>
            <person name="Yuan L."/>
            <person name="Cao M."/>
            <person name="McDermott J."/>
            <person name="Samudrala R."/>
            <person name="Wang J."/>
            <person name="Wong G.K.-S."/>
            <person name="Yang H."/>
        </authorList>
    </citation>
    <scope>NUCLEOTIDE SEQUENCE [LARGE SCALE GENOMIC DNA]</scope>
    <source>
        <strain>cv. Nipponbare</strain>
    </source>
</reference>
<reference key="7">
    <citation type="journal article" date="2012" name="Planta">
        <title>OsLIS-L1 encoding a lissencephaly type-1-like protein with WD40 repeats is required for plant height and male gametophyte formation in rice.</title>
        <authorList>
            <person name="Gao X."/>
            <person name="Chen Z."/>
            <person name="Zhang J."/>
            <person name="Li X."/>
            <person name="Chen G."/>
            <person name="Li X."/>
            <person name="Wu C."/>
        </authorList>
    </citation>
    <scope>TISSUE SPECIFICITY</scope>
    <scope>DEVELOPMENTAL STAGE</scope>
    <scope>GENE FAMILY</scope>
</reference>
<reference key="8">
    <citation type="journal article" date="2013" name="Nature">
        <title>DWARF 53 acts as a repressor of strigolactone signalling in rice.</title>
        <authorList>
            <person name="Jiang L."/>
            <person name="Liu X."/>
            <person name="Xiong G."/>
            <person name="Liu H."/>
            <person name="Chen F."/>
            <person name="Wang L."/>
            <person name="Meng X."/>
            <person name="Liu G."/>
            <person name="Yu H."/>
            <person name="Yuan Y."/>
            <person name="Yi W."/>
            <person name="Zhao L."/>
            <person name="Ma H."/>
            <person name="He Y."/>
            <person name="Wu Z."/>
            <person name="Melcher K."/>
            <person name="Qian Q."/>
            <person name="Xu H.E."/>
            <person name="Wang Y."/>
            <person name="Li J."/>
        </authorList>
    </citation>
    <scope>INTERACTION WITH D53</scope>
    <scope>GENE FAMILY</scope>
    <scope>NOMENCLATURE</scope>
</reference>
<reference key="9">
    <citation type="journal article" date="2015" name="J. Genet. Genomics">
        <title>MONOCULM 3, an ortholog of WUSCHEL in rice, is required for tiller bud formation.</title>
        <authorList>
            <person name="Lu Z."/>
            <person name="Shao G."/>
            <person name="Xiong J."/>
            <person name="Jiao Y."/>
            <person name="Wang J."/>
            <person name="Liu G."/>
            <person name="Meng X."/>
            <person name="Liang Y."/>
            <person name="Xiong G."/>
            <person name="Wang Y."/>
            <person name="Li J."/>
        </authorList>
    </citation>
    <scope>INTERACTION WITH WOX1</scope>
</reference>
<reference key="10">
    <citation type="journal article" date="2015" name="Sci. Adv.">
        <title>Structural basis for recognition of diverse transcriptional repressors by the TOPLESS family of corepressors.</title>
        <authorList>
            <person name="Ke J."/>
            <person name="Ma H."/>
            <person name="Gu X."/>
            <person name="Thelen A."/>
            <person name="Brunzelle J.S."/>
            <person name="Li J."/>
            <person name="Xu H.E."/>
            <person name="Melcher K."/>
        </authorList>
    </citation>
    <scope>NOMENCLATURE</scope>
</reference>
<reference key="11">
    <citation type="journal article" date="2016" name="Plant Cell">
        <title>MODD mediates deactivation and degradation of OsbZIP46 to negatively regulate ABA signaling and drought resistance in rice.</title>
        <authorList>
            <person name="Tang N."/>
            <person name="Ma S."/>
            <person name="Zong W."/>
            <person name="Yang N."/>
            <person name="Lv Y."/>
            <person name="Yan C."/>
            <person name="Guo Z."/>
            <person name="Li J."/>
            <person name="Li X."/>
            <person name="Xiang Y."/>
            <person name="Song H."/>
            <person name="Xiao J."/>
            <person name="Li X."/>
            <person name="Xiong L."/>
        </authorList>
    </citation>
    <scope>FUNCTION</scope>
    <scope>INTERACTION WITH MODD AND HDAC1</scope>
</reference>
<reference key="12">
    <citation type="journal article" date="2020" name="Plant Physiol.">
        <title>MORE FLORET 1 encodes a MYB transcription factor that regulates spikelet development in rice.</title>
        <authorList>
            <person name="Ren D."/>
            <person name="Rao Y."/>
            <person name="Yu H."/>
            <person name="Xu Q."/>
            <person name="Cui Y."/>
            <person name="Xia S."/>
            <person name="Yu X."/>
            <person name="Liu H."/>
            <person name="Hu H."/>
            <person name="Xue D."/>
            <person name="Zeng D."/>
            <person name="Hu J."/>
            <person name="Zhang G."/>
            <person name="Gao Z."/>
            <person name="Zhu L."/>
            <person name="Zhang Q."/>
            <person name="Shen L."/>
            <person name="Guo L."/>
            <person name="Qian Q."/>
        </authorList>
    </citation>
    <scope>INTERACTION WITH MOF1</scope>
</reference>
<sequence>MSSLSRELVFLILQFLDEEKFKETVHKLEQESGFYFNMKYFEDEVINGNWDEVERYLGGFTKVDDNRYSMKIFFEIRKQKYLEALDKHDRSKAVEILVKDLKVFASFNEELFKEITQLLTLENFRENEQLSKYGDTKSARAIMLVELKKLIEANPLFRDKLQFPNLKSSRLRTLINQSLNWQHQLCKNPRPNPDIKTLFVDHSCGQPNGARAPSPANNPLLGSIPKPGGFPPLGAHAPFQPAPTPVPPLAGWMSNPPAVTHPAVSGGAIGFGTPTNPAAILKHPRTPTTANPSMDYPSGDSDHVSKRTRPVGMSEEVNLPVNMLPVTYPQSHSYPQDDFHKNVARTLSQGSTPMSMDFHPVQQTLLLVGTNVGDIGLWDVGTKERLVLRNFKVWDLTKCSMALQASLVKDPTVSVNRIIWSPDGTLFGVAYSRHIVQIYSYHGGDDIRQHLEIDAHVGGVNDIAFAHPNKQLCIITCGDDKTIKVWEATSGAKQFTFEGHEAPVYSVCPHYKENIQFIFSTALDGKIKAWLYDNLGSRVDYDAPGHWCTTMAYSADGSRLFSCGTSKDGESHLVEWNESEGAVKRTYQGFRKRSMGVVQFDTTRNRFLAAGDEFLIKIWDMDNTSLLTTIDADGGLPASPRVRFNKEGTLLAVSTHENGIKILANADGVRLLRTLENRSFDASRSASETVTKPLMNPLTAAAAAAASAAAAGTSSGNAAPPAITALNGDSRSLVDVKPRIADEPLDKSKVWKLMEITESSQCRSLKLTDNMRTSKISRLIYTNSGVAILALASNAVHLLWKWPRNDRNSSGKATASVSPQLWQPPSGILMTNDITDNPEEAVHCFALSKNDSYVMSASGGKISLFNMMTFKTMTTFMPPPPAATFLAFHPQDNNIIAIGMDDSTIQIYNVRIDEVKSKLRGHSKKITGLAFSNVLNVLVSSGADAQICVWSTDGWDKLKSRMLQIPSSRPSSIILDTRVQFHQDQLHFLVVHETQIAIYETTKLEPVKQWPVRENSSPITHAMFSCDSQLIYASFLDATVCIFNASSLRLQCRILPASYLPQNISSNVYPVVVAAHPSEANQFALGLTDGGVYVLEPLESERKWGNPPPAENGSTSALSTPPNGASSSDQPER</sequence>
<protein>
    <recommendedName>
        <fullName evidence="13">Protein TPR3</fullName>
    </recommendedName>
    <alternativeName>
        <fullName evidence="12">Aberrant spikelet and panicle1-related 1</fullName>
    </alternativeName>
    <alternativeName>
        <fullName evidence="12">Protein ASP1-RELATED 1</fullName>
        <shortName evidence="12">OsASPR1</shortName>
    </alternativeName>
    <alternativeName>
        <fullName evidence="14">Topless-related protein 1</fullName>
        <shortName evidence="14">OsTPR1</shortName>
    </alternativeName>
    <alternativeName>
        <fullName evidence="13">Topless-related protein 3</fullName>
    </alternativeName>
</protein>
<dbReference type="EMBL" id="AB638270">
    <property type="protein sequence ID" value="BAL44267.1"/>
    <property type="molecule type" value="mRNA"/>
</dbReference>
<dbReference type="EMBL" id="DP000009">
    <property type="protein sequence ID" value="ABF95023.1"/>
    <property type="molecule type" value="Genomic_DNA"/>
</dbReference>
<dbReference type="EMBL" id="AP008209">
    <property type="protein sequence ID" value="BAF11501.1"/>
    <property type="molecule type" value="Genomic_DNA"/>
</dbReference>
<dbReference type="EMBL" id="AP014959">
    <property type="protein sequence ID" value="BAS83314.1"/>
    <property type="molecule type" value="Genomic_DNA"/>
</dbReference>
<dbReference type="EMBL" id="CM000139">
    <property type="protein sequence ID" value="EEE57834.1"/>
    <property type="status" value="ALT_SEQ"/>
    <property type="molecule type" value="Genomic_DNA"/>
</dbReference>
<dbReference type="RefSeq" id="NP_001389053.1">
    <property type="nucleotide sequence ID" value="NM_001402124.1"/>
</dbReference>
<dbReference type="RefSeq" id="XP_015631118.1">
    <property type="nucleotide sequence ID" value="XM_015775632.1"/>
</dbReference>
<dbReference type="RefSeq" id="XP_015631120.1">
    <property type="nucleotide sequence ID" value="XM_015775634.1"/>
</dbReference>
<dbReference type="FunCoup" id="Q10NY2">
    <property type="interactions" value="1586"/>
</dbReference>
<dbReference type="STRING" id="39947.Q10NY2"/>
<dbReference type="iPTMnet" id="Q10NY2"/>
<dbReference type="PaxDb" id="39947-Q10NY2"/>
<dbReference type="EnsemblPlants" id="Os03t0254700-01">
    <property type="protein sequence ID" value="Os03t0254700-01"/>
    <property type="gene ID" value="Os03g0254700"/>
</dbReference>
<dbReference type="GeneID" id="4332285"/>
<dbReference type="Gramene" id="Os03t0254700-01">
    <property type="protein sequence ID" value="Os03t0254700-01"/>
    <property type="gene ID" value="Os03g0254700"/>
</dbReference>
<dbReference type="KEGG" id="dosa:Os03g0254700"/>
<dbReference type="eggNOG" id="KOG0266">
    <property type="taxonomic scope" value="Eukaryota"/>
</dbReference>
<dbReference type="HOGENOM" id="CLU_003103_1_0_1"/>
<dbReference type="InParanoid" id="Q10NY2"/>
<dbReference type="OMA" id="IKIMANS"/>
<dbReference type="OrthoDB" id="6262491at2759"/>
<dbReference type="PlantReactome" id="R-OSA-5632095">
    <property type="pathway name" value="Brassinosteroid signaling"/>
</dbReference>
<dbReference type="PlantReactome" id="R-OSA-5654828">
    <property type="pathway name" value="Strigolactone signaling"/>
</dbReference>
<dbReference type="Proteomes" id="UP000000763">
    <property type="component" value="Chromosome 3"/>
</dbReference>
<dbReference type="Proteomes" id="UP000007752">
    <property type="component" value="Chromosome 2"/>
</dbReference>
<dbReference type="Proteomes" id="UP000059680">
    <property type="component" value="Chromosome 3"/>
</dbReference>
<dbReference type="ExpressionAtlas" id="Q10NY2">
    <property type="expression patterns" value="baseline and differential"/>
</dbReference>
<dbReference type="GO" id="GO:0006355">
    <property type="term" value="P:regulation of DNA-templated transcription"/>
    <property type="evidence" value="ECO:0000318"/>
    <property type="project" value="GO_Central"/>
</dbReference>
<dbReference type="FunFam" id="2.130.10.10:FF:000558">
    <property type="entry name" value="Topless-related protein 1"/>
    <property type="match status" value="1"/>
</dbReference>
<dbReference type="FunFam" id="2.130.10.10:FF:000479">
    <property type="entry name" value="Topless-related protein 3"/>
    <property type="match status" value="1"/>
</dbReference>
<dbReference type="Gene3D" id="2.130.10.10">
    <property type="entry name" value="YVTN repeat-like/Quinoprotein amine dehydrogenase"/>
    <property type="match status" value="3"/>
</dbReference>
<dbReference type="InterPro" id="IPR006595">
    <property type="entry name" value="CTLH_C"/>
</dbReference>
<dbReference type="InterPro" id="IPR006594">
    <property type="entry name" value="LisH"/>
</dbReference>
<dbReference type="InterPro" id="IPR011047">
    <property type="entry name" value="Quinoprotein_ADH-like_sf"/>
</dbReference>
<dbReference type="InterPro" id="IPR027728">
    <property type="entry name" value="Topless_fam"/>
</dbReference>
<dbReference type="InterPro" id="IPR048419">
    <property type="entry name" value="Topless_Znf"/>
</dbReference>
<dbReference type="InterPro" id="IPR054532">
    <property type="entry name" value="TPL_SMU1_LisH-like"/>
</dbReference>
<dbReference type="InterPro" id="IPR054080">
    <property type="entry name" value="TPR1-like_2nd"/>
</dbReference>
<dbReference type="InterPro" id="IPR015943">
    <property type="entry name" value="WD40/YVTN_repeat-like_dom_sf"/>
</dbReference>
<dbReference type="InterPro" id="IPR019775">
    <property type="entry name" value="WD40_repeat_CS"/>
</dbReference>
<dbReference type="InterPro" id="IPR036322">
    <property type="entry name" value="WD40_repeat_dom_sf"/>
</dbReference>
<dbReference type="InterPro" id="IPR001680">
    <property type="entry name" value="WD40_rpt"/>
</dbReference>
<dbReference type="PANTHER" id="PTHR44083:SF45">
    <property type="entry name" value="TOPLESS-RELATED PROTEIN 1"/>
    <property type="match status" value="1"/>
</dbReference>
<dbReference type="PANTHER" id="PTHR44083">
    <property type="entry name" value="TOPLESS-RELATED PROTEIN 1-RELATED"/>
    <property type="match status" value="1"/>
</dbReference>
<dbReference type="Pfam" id="PF17814">
    <property type="entry name" value="LisH_TPL"/>
    <property type="match status" value="1"/>
</dbReference>
<dbReference type="Pfam" id="PF21889">
    <property type="entry name" value="TPR1-like_2nd"/>
    <property type="match status" value="1"/>
</dbReference>
<dbReference type="Pfam" id="PF00400">
    <property type="entry name" value="WD40"/>
    <property type="match status" value="3"/>
</dbReference>
<dbReference type="Pfam" id="PF21359">
    <property type="entry name" value="zf_topless"/>
    <property type="match status" value="1"/>
</dbReference>
<dbReference type="SMART" id="SM00668">
    <property type="entry name" value="CTLH"/>
    <property type="match status" value="1"/>
</dbReference>
<dbReference type="SMART" id="SM00667">
    <property type="entry name" value="LisH"/>
    <property type="match status" value="1"/>
</dbReference>
<dbReference type="SMART" id="SM00320">
    <property type="entry name" value="WD40"/>
    <property type="match status" value="10"/>
</dbReference>
<dbReference type="SUPFAM" id="SSF50998">
    <property type="entry name" value="Quinoprotein alcohol dehydrogenase-like"/>
    <property type="match status" value="1"/>
</dbReference>
<dbReference type="SUPFAM" id="SSF50978">
    <property type="entry name" value="WD40 repeat-like"/>
    <property type="match status" value="1"/>
</dbReference>
<dbReference type="PROSITE" id="PS50897">
    <property type="entry name" value="CTLH"/>
    <property type="match status" value="1"/>
</dbReference>
<dbReference type="PROSITE" id="PS50896">
    <property type="entry name" value="LISH"/>
    <property type="match status" value="1"/>
</dbReference>
<dbReference type="PROSITE" id="PS00678">
    <property type="entry name" value="WD_REPEATS_1"/>
    <property type="match status" value="1"/>
</dbReference>
<dbReference type="PROSITE" id="PS50082">
    <property type="entry name" value="WD_REPEATS_2"/>
    <property type="match status" value="2"/>
</dbReference>
<dbReference type="PROSITE" id="PS50294">
    <property type="entry name" value="WD_REPEATS_REGION"/>
    <property type="match status" value="2"/>
</dbReference>